<proteinExistence type="inferred from homology"/>
<name>RNB_KLEP7</name>
<reference key="1">
    <citation type="submission" date="2006-09" db="EMBL/GenBank/DDBJ databases">
        <authorList>
            <consortium name="The Klebsiella pneumonia Genome Sequencing Project"/>
            <person name="McClelland M."/>
            <person name="Sanderson E.K."/>
            <person name="Spieth J."/>
            <person name="Clifton W.S."/>
            <person name="Latreille P."/>
            <person name="Sabo A."/>
            <person name="Pepin K."/>
            <person name="Bhonagiri V."/>
            <person name="Porwollik S."/>
            <person name="Ali J."/>
            <person name="Wilson R.K."/>
        </authorList>
    </citation>
    <scope>NUCLEOTIDE SEQUENCE [LARGE SCALE GENOMIC DNA]</scope>
    <source>
        <strain>ATCC 700721 / MGH 78578</strain>
    </source>
</reference>
<keyword id="KW-0963">Cytoplasm</keyword>
<keyword id="KW-0269">Exonuclease</keyword>
<keyword id="KW-0378">Hydrolase</keyword>
<keyword id="KW-0540">Nuclease</keyword>
<keyword id="KW-0694">RNA-binding</keyword>
<organism>
    <name type="scientific">Klebsiella pneumoniae subsp. pneumoniae (strain ATCC 700721 / MGH 78578)</name>
    <dbReference type="NCBI Taxonomy" id="272620"/>
    <lineage>
        <taxon>Bacteria</taxon>
        <taxon>Pseudomonadati</taxon>
        <taxon>Pseudomonadota</taxon>
        <taxon>Gammaproteobacteria</taxon>
        <taxon>Enterobacterales</taxon>
        <taxon>Enterobacteriaceae</taxon>
        <taxon>Klebsiella/Raoultella group</taxon>
        <taxon>Klebsiella</taxon>
        <taxon>Klebsiella pneumoniae complex</taxon>
    </lineage>
</organism>
<accession>A6T7Z4</accession>
<feature type="chain" id="PRO_1000063893" description="Exoribonuclease 2">
    <location>
        <begin position="1"/>
        <end position="644"/>
    </location>
</feature>
<feature type="domain" description="RNB" evidence="1">
    <location>
        <begin position="189"/>
        <end position="516"/>
    </location>
</feature>
<feature type="domain" description="S1 motif" evidence="2">
    <location>
        <begin position="561"/>
        <end position="643"/>
    </location>
</feature>
<protein>
    <recommendedName>
        <fullName evidence="2">Exoribonuclease 2</fullName>
        <ecNumber evidence="2">3.1.13.1</ecNumber>
    </recommendedName>
    <alternativeName>
        <fullName evidence="2">Exoribonuclease II</fullName>
        <shortName evidence="2">RNase II</shortName>
        <shortName evidence="2">Ribonuclease II</shortName>
    </alternativeName>
</protein>
<sequence>MFQDNPLLAQLKQQLHSQTPRAEGVVKGTEKGFGFLEVDAQKSYFIPPPQMKKVMHGDRIVAVIHSEKERESAEPESLVEPFLTRFVGKVQKKDDRLAIVPDHPLLKDAIPCRAARGVEHDFKQGDWAVAEMRRHPLKGDRGFYAELTQFITFSDDHFVPWWVTLARHNLEKEAPDGVATEMLDEGLTRRDLTALDFVTIDSASTEDMDDALYAESTADGKLLLTVAIADPTAWIAEGSKLDNAAKVRAFTNYLPGFNIPMLPRELSDDLCSLRANEVRPVLACRMTLAADGTIEDNIEFFAATIESKAKLAYDDVSDWLEGRGSWQPDSEAIAQQITLLKDVCQRRSEWRQTHALVFKDRPDYRFVLGEKGEVLDIVAEPRRIANRIVEESMIAANICAARVLRDKLGFGVYNVHTGFDPANTEQLAALLKTHDVHVDPTEVLTLEGFCKLRRELDAQPTGFLDSRIRRFQSFAEISTEPGPHFGLGLEAYATWTSPIRKYGDMINHRLLKAIIKGETIARPQDEATVQMAERRRLNRMAERDVADWLYARFLNDKAGTDTRFAAEIIDVSRGGMRVRLVDNGAVAFIPAPFLHAVRDELVCSQENGTVQIKGEVVYKVTDVIDVTIAEVRMETRSIIARPAV</sequence>
<comment type="function">
    <text evidence="2">Involved in mRNA degradation. Hydrolyzes single-stranded polyribonucleotides processively in the 3' to 5' direction.</text>
</comment>
<comment type="catalytic activity">
    <reaction evidence="2">
        <text>Exonucleolytic cleavage in the 3'- to 5'-direction to yield nucleoside 5'-phosphates.</text>
        <dbReference type="EC" id="3.1.13.1"/>
    </reaction>
</comment>
<comment type="subcellular location">
    <subcellularLocation>
        <location evidence="2">Cytoplasm</location>
    </subcellularLocation>
</comment>
<comment type="similarity">
    <text evidence="2">Belongs to the RNR ribonuclease family. RNase II subfamily.</text>
</comment>
<gene>
    <name evidence="2" type="primary">rnb</name>
    <name type="ordered locus">KPN78578_12540</name>
    <name type="ORF">KPN_01282</name>
</gene>
<evidence type="ECO:0000255" key="1"/>
<evidence type="ECO:0000255" key="2">
    <source>
        <dbReference type="HAMAP-Rule" id="MF_01036"/>
    </source>
</evidence>
<dbReference type="EC" id="3.1.13.1" evidence="2"/>
<dbReference type="EMBL" id="CP000647">
    <property type="protein sequence ID" value="ABR76715.1"/>
    <property type="molecule type" value="Genomic_DNA"/>
</dbReference>
<dbReference type="RefSeq" id="WP_002901787.1">
    <property type="nucleotide sequence ID" value="NC_009648.1"/>
</dbReference>
<dbReference type="SMR" id="A6T7Z4"/>
<dbReference type="STRING" id="272620.KPN_01282"/>
<dbReference type="PaxDb" id="272620-KPN_01282"/>
<dbReference type="EnsemblBacteria" id="ABR76715">
    <property type="protein sequence ID" value="ABR76715"/>
    <property type="gene ID" value="KPN_01282"/>
</dbReference>
<dbReference type="KEGG" id="kpn:KPN_01282"/>
<dbReference type="HOGENOM" id="CLU_002333_7_3_6"/>
<dbReference type="Proteomes" id="UP000000265">
    <property type="component" value="Chromosome"/>
</dbReference>
<dbReference type="GO" id="GO:0005829">
    <property type="term" value="C:cytosol"/>
    <property type="evidence" value="ECO:0007669"/>
    <property type="project" value="UniProtKB-ARBA"/>
</dbReference>
<dbReference type="GO" id="GO:0008859">
    <property type="term" value="F:exoribonuclease II activity"/>
    <property type="evidence" value="ECO:0007669"/>
    <property type="project" value="UniProtKB-UniRule"/>
</dbReference>
<dbReference type="GO" id="GO:0003723">
    <property type="term" value="F:RNA binding"/>
    <property type="evidence" value="ECO:0007669"/>
    <property type="project" value="UniProtKB-KW"/>
</dbReference>
<dbReference type="GO" id="GO:0006402">
    <property type="term" value="P:mRNA catabolic process"/>
    <property type="evidence" value="ECO:0007669"/>
    <property type="project" value="UniProtKB-UniRule"/>
</dbReference>
<dbReference type="FunFam" id="2.40.50.140:FF:000079">
    <property type="entry name" value="Exoribonuclease 2"/>
    <property type="match status" value="1"/>
</dbReference>
<dbReference type="FunFam" id="2.40.50.140:FF:000081">
    <property type="entry name" value="Exoribonuclease 2"/>
    <property type="match status" value="1"/>
</dbReference>
<dbReference type="FunFam" id="2.40.50.640:FF:000001">
    <property type="entry name" value="Exoribonuclease 2"/>
    <property type="match status" value="1"/>
</dbReference>
<dbReference type="Gene3D" id="2.40.50.640">
    <property type="match status" value="1"/>
</dbReference>
<dbReference type="Gene3D" id="2.40.50.140">
    <property type="entry name" value="Nucleic acid-binding proteins"/>
    <property type="match status" value="2"/>
</dbReference>
<dbReference type="HAMAP" id="MF_01036">
    <property type="entry name" value="RNase_II"/>
    <property type="match status" value="1"/>
</dbReference>
<dbReference type="InterPro" id="IPR011129">
    <property type="entry name" value="CSD"/>
</dbReference>
<dbReference type="InterPro" id="IPR012340">
    <property type="entry name" value="NA-bd_OB-fold"/>
</dbReference>
<dbReference type="InterPro" id="IPR013223">
    <property type="entry name" value="RNase_B_OB_dom"/>
</dbReference>
<dbReference type="InterPro" id="IPR011804">
    <property type="entry name" value="RNase_II"/>
</dbReference>
<dbReference type="InterPro" id="IPR001900">
    <property type="entry name" value="RNase_II/R"/>
</dbReference>
<dbReference type="InterPro" id="IPR022966">
    <property type="entry name" value="RNase_II/R_CS"/>
</dbReference>
<dbReference type="InterPro" id="IPR004476">
    <property type="entry name" value="RNase_II/RNase_R"/>
</dbReference>
<dbReference type="InterPro" id="IPR050180">
    <property type="entry name" value="RNR_Ribonuclease"/>
</dbReference>
<dbReference type="InterPro" id="IPR003029">
    <property type="entry name" value="S1_domain"/>
</dbReference>
<dbReference type="NCBIfam" id="TIGR00358">
    <property type="entry name" value="3_prime_RNase"/>
    <property type="match status" value="1"/>
</dbReference>
<dbReference type="NCBIfam" id="NF003455">
    <property type="entry name" value="PRK05054.1"/>
    <property type="match status" value="1"/>
</dbReference>
<dbReference type="NCBIfam" id="TIGR02062">
    <property type="entry name" value="RNase_B"/>
    <property type="match status" value="1"/>
</dbReference>
<dbReference type="PANTHER" id="PTHR23355:SF37">
    <property type="entry name" value="EXORIBONUCLEASE 2"/>
    <property type="match status" value="1"/>
</dbReference>
<dbReference type="PANTHER" id="PTHR23355">
    <property type="entry name" value="RIBONUCLEASE"/>
    <property type="match status" value="1"/>
</dbReference>
<dbReference type="Pfam" id="PF08206">
    <property type="entry name" value="OB_RNB"/>
    <property type="match status" value="1"/>
</dbReference>
<dbReference type="Pfam" id="PF00773">
    <property type="entry name" value="RNB"/>
    <property type="match status" value="1"/>
</dbReference>
<dbReference type="Pfam" id="PF00575">
    <property type="entry name" value="S1"/>
    <property type="match status" value="1"/>
</dbReference>
<dbReference type="SMART" id="SM00357">
    <property type="entry name" value="CSP"/>
    <property type="match status" value="1"/>
</dbReference>
<dbReference type="SMART" id="SM00955">
    <property type="entry name" value="RNB"/>
    <property type="match status" value="1"/>
</dbReference>
<dbReference type="SUPFAM" id="SSF50249">
    <property type="entry name" value="Nucleic acid-binding proteins"/>
    <property type="match status" value="4"/>
</dbReference>
<dbReference type="PROSITE" id="PS01175">
    <property type="entry name" value="RIBONUCLEASE_II"/>
    <property type="match status" value="1"/>
</dbReference>